<protein>
    <recommendedName>
        <fullName evidence="1">ATP-dependent Clp protease ATP-binding subunit ClpX</fullName>
    </recommendedName>
</protein>
<comment type="function">
    <text evidence="1">ATP-dependent specificity component of the Clp protease. It directs the protease to specific substrates. Can perform chaperone functions in the absence of ClpP.</text>
</comment>
<comment type="subunit">
    <text evidence="1">Component of the ClpX-ClpP complex. Forms a hexameric ring that, in the presence of ATP, binds to fourteen ClpP subunits assembled into a disk-like structure with a central cavity, resembling the structure of eukaryotic proteasomes.</text>
</comment>
<comment type="similarity">
    <text evidence="1">Belongs to the ClpX chaperone family.</text>
</comment>
<dbReference type="EMBL" id="AM884176">
    <property type="protein sequence ID" value="CAP03518.1"/>
    <property type="molecule type" value="Genomic_DNA"/>
</dbReference>
<dbReference type="RefSeq" id="WP_009873309.1">
    <property type="nucleotide sequence ID" value="NC_010287.1"/>
</dbReference>
<dbReference type="RefSeq" id="YP_001654165.1">
    <property type="nucleotide sequence ID" value="NC_010287.1"/>
</dbReference>
<dbReference type="SMR" id="B0B8T1"/>
<dbReference type="KEGG" id="ctb:CTL0074"/>
<dbReference type="PATRIC" id="fig|471472.4.peg.79"/>
<dbReference type="HOGENOM" id="CLU_014218_8_2_0"/>
<dbReference type="Proteomes" id="UP001154402">
    <property type="component" value="Chromosome"/>
</dbReference>
<dbReference type="GO" id="GO:0009376">
    <property type="term" value="C:HslUV protease complex"/>
    <property type="evidence" value="ECO:0007669"/>
    <property type="project" value="TreeGrafter"/>
</dbReference>
<dbReference type="GO" id="GO:0005524">
    <property type="term" value="F:ATP binding"/>
    <property type="evidence" value="ECO:0007669"/>
    <property type="project" value="UniProtKB-UniRule"/>
</dbReference>
<dbReference type="GO" id="GO:0016887">
    <property type="term" value="F:ATP hydrolysis activity"/>
    <property type="evidence" value="ECO:0007669"/>
    <property type="project" value="InterPro"/>
</dbReference>
<dbReference type="GO" id="GO:0140662">
    <property type="term" value="F:ATP-dependent protein folding chaperone"/>
    <property type="evidence" value="ECO:0007669"/>
    <property type="project" value="InterPro"/>
</dbReference>
<dbReference type="GO" id="GO:0046983">
    <property type="term" value="F:protein dimerization activity"/>
    <property type="evidence" value="ECO:0007669"/>
    <property type="project" value="InterPro"/>
</dbReference>
<dbReference type="GO" id="GO:0051082">
    <property type="term" value="F:unfolded protein binding"/>
    <property type="evidence" value="ECO:0007669"/>
    <property type="project" value="UniProtKB-UniRule"/>
</dbReference>
<dbReference type="GO" id="GO:0008270">
    <property type="term" value="F:zinc ion binding"/>
    <property type="evidence" value="ECO:0007669"/>
    <property type="project" value="InterPro"/>
</dbReference>
<dbReference type="GO" id="GO:0051301">
    <property type="term" value="P:cell division"/>
    <property type="evidence" value="ECO:0007669"/>
    <property type="project" value="TreeGrafter"/>
</dbReference>
<dbReference type="GO" id="GO:0051603">
    <property type="term" value="P:proteolysis involved in protein catabolic process"/>
    <property type="evidence" value="ECO:0007669"/>
    <property type="project" value="TreeGrafter"/>
</dbReference>
<dbReference type="CDD" id="cd19497">
    <property type="entry name" value="RecA-like_ClpX"/>
    <property type="match status" value="1"/>
</dbReference>
<dbReference type="FunFam" id="1.10.8.60:FF:000002">
    <property type="entry name" value="ATP-dependent Clp protease ATP-binding subunit ClpX"/>
    <property type="match status" value="1"/>
</dbReference>
<dbReference type="FunFam" id="3.40.50.300:FF:000005">
    <property type="entry name" value="ATP-dependent Clp protease ATP-binding subunit ClpX"/>
    <property type="match status" value="1"/>
</dbReference>
<dbReference type="Gene3D" id="1.10.8.60">
    <property type="match status" value="1"/>
</dbReference>
<dbReference type="Gene3D" id="6.20.220.10">
    <property type="entry name" value="ClpX chaperone, C4-type zinc finger domain"/>
    <property type="match status" value="1"/>
</dbReference>
<dbReference type="Gene3D" id="3.40.50.300">
    <property type="entry name" value="P-loop containing nucleotide triphosphate hydrolases"/>
    <property type="match status" value="1"/>
</dbReference>
<dbReference type="HAMAP" id="MF_00175">
    <property type="entry name" value="ClpX"/>
    <property type="match status" value="1"/>
</dbReference>
<dbReference type="InterPro" id="IPR003593">
    <property type="entry name" value="AAA+_ATPase"/>
</dbReference>
<dbReference type="InterPro" id="IPR050052">
    <property type="entry name" value="ATP-dep_Clp_protease_ClpX"/>
</dbReference>
<dbReference type="InterPro" id="IPR003959">
    <property type="entry name" value="ATPase_AAA_core"/>
</dbReference>
<dbReference type="InterPro" id="IPR019489">
    <property type="entry name" value="Clp_ATPase_C"/>
</dbReference>
<dbReference type="InterPro" id="IPR004487">
    <property type="entry name" value="Clp_protease_ATP-bd_su_ClpX"/>
</dbReference>
<dbReference type="InterPro" id="IPR046425">
    <property type="entry name" value="ClpX_bact"/>
</dbReference>
<dbReference type="InterPro" id="IPR027417">
    <property type="entry name" value="P-loop_NTPase"/>
</dbReference>
<dbReference type="InterPro" id="IPR010603">
    <property type="entry name" value="Znf_CppX_C4"/>
</dbReference>
<dbReference type="InterPro" id="IPR038366">
    <property type="entry name" value="Znf_CppX_C4_sf"/>
</dbReference>
<dbReference type="NCBIfam" id="TIGR00382">
    <property type="entry name" value="clpX"/>
    <property type="match status" value="1"/>
</dbReference>
<dbReference type="NCBIfam" id="NF003745">
    <property type="entry name" value="PRK05342.1"/>
    <property type="match status" value="1"/>
</dbReference>
<dbReference type="PANTHER" id="PTHR48102:SF7">
    <property type="entry name" value="ATP-DEPENDENT CLP PROTEASE ATP-BINDING SUBUNIT CLPX-LIKE, MITOCHONDRIAL"/>
    <property type="match status" value="1"/>
</dbReference>
<dbReference type="PANTHER" id="PTHR48102">
    <property type="entry name" value="ATP-DEPENDENT CLP PROTEASE ATP-BINDING SUBUNIT CLPX-LIKE, MITOCHONDRIAL-RELATED"/>
    <property type="match status" value="1"/>
</dbReference>
<dbReference type="Pfam" id="PF07724">
    <property type="entry name" value="AAA_2"/>
    <property type="match status" value="1"/>
</dbReference>
<dbReference type="Pfam" id="PF10431">
    <property type="entry name" value="ClpB_D2-small"/>
    <property type="match status" value="1"/>
</dbReference>
<dbReference type="Pfam" id="PF06689">
    <property type="entry name" value="zf-C4_ClpX"/>
    <property type="match status" value="1"/>
</dbReference>
<dbReference type="SMART" id="SM00382">
    <property type="entry name" value="AAA"/>
    <property type="match status" value="1"/>
</dbReference>
<dbReference type="SMART" id="SM01086">
    <property type="entry name" value="ClpB_D2-small"/>
    <property type="match status" value="1"/>
</dbReference>
<dbReference type="SMART" id="SM00994">
    <property type="entry name" value="zf-C4_ClpX"/>
    <property type="match status" value="1"/>
</dbReference>
<dbReference type="SUPFAM" id="SSF57716">
    <property type="entry name" value="Glucocorticoid receptor-like (DNA-binding domain)"/>
    <property type="match status" value="1"/>
</dbReference>
<dbReference type="SUPFAM" id="SSF52540">
    <property type="entry name" value="P-loop containing nucleoside triphosphate hydrolases"/>
    <property type="match status" value="1"/>
</dbReference>
<dbReference type="PROSITE" id="PS51902">
    <property type="entry name" value="CLPX_ZB"/>
    <property type="match status" value="1"/>
</dbReference>
<sequence length="419" mass="46183">MTKKNLAVCSFCGRSEKDVEKLIAGPSVYICDYCIKLCSGILDKTPAPATQEIATSSTSSPTSLRVLTPKEIKRHIDSYVIGQERAKKTISVAVYNHYKRIRALMQDKQVSYGKSNVLLLGPTGSGKTLIAKTLAKILDVPFTIADATTLTEAGYVGEDVENIVLRLLQAADYDVARAERGIIYIDEIDKIGRTTANVSITRDVSGEGVQQALLKIIEGTVANIPPKGGRKHPNQEYIRVNTENILFIVGGAFVNLDKIIAKRLGRTTIGFSEETDLAVTNRDHLLAKVETEDLITFGMIPEFIGRFNCIVNCEELTLDELVEILTEPANAIVKQYTELFEEENVKLIFEKEALYAIAQKAKQAKTGARALGMILENLLRDLMFEIPSDPTVEAIRIEEDTITQNKPPVIIQKSPEAIA</sequence>
<evidence type="ECO:0000255" key="1">
    <source>
        <dbReference type="HAMAP-Rule" id="MF_00175"/>
    </source>
</evidence>
<evidence type="ECO:0000255" key="2">
    <source>
        <dbReference type="PROSITE-ProRule" id="PRU01250"/>
    </source>
</evidence>
<gene>
    <name evidence="1" type="primary">clpX</name>
    <name type="ordered locus">CTL0074</name>
</gene>
<proteinExistence type="inferred from homology"/>
<feature type="chain" id="PRO_1000097936" description="ATP-dependent Clp protease ATP-binding subunit ClpX">
    <location>
        <begin position="1"/>
        <end position="419"/>
    </location>
</feature>
<feature type="domain" description="ClpX-type ZB" evidence="2">
    <location>
        <begin position="1"/>
        <end position="50"/>
    </location>
</feature>
<feature type="binding site" evidence="2">
    <location>
        <position position="9"/>
    </location>
    <ligand>
        <name>Zn(2+)</name>
        <dbReference type="ChEBI" id="CHEBI:29105"/>
    </ligand>
</feature>
<feature type="binding site" evidence="2">
    <location>
        <position position="12"/>
    </location>
    <ligand>
        <name>Zn(2+)</name>
        <dbReference type="ChEBI" id="CHEBI:29105"/>
    </ligand>
</feature>
<feature type="binding site" evidence="2">
    <location>
        <position position="31"/>
    </location>
    <ligand>
        <name>Zn(2+)</name>
        <dbReference type="ChEBI" id="CHEBI:29105"/>
    </ligand>
</feature>
<feature type="binding site" evidence="2">
    <location>
        <position position="34"/>
    </location>
    <ligand>
        <name>Zn(2+)</name>
        <dbReference type="ChEBI" id="CHEBI:29105"/>
    </ligand>
</feature>
<feature type="binding site" evidence="1">
    <location>
        <begin position="122"/>
        <end position="129"/>
    </location>
    <ligand>
        <name>ATP</name>
        <dbReference type="ChEBI" id="CHEBI:30616"/>
    </ligand>
</feature>
<keyword id="KW-0067">ATP-binding</keyword>
<keyword id="KW-0143">Chaperone</keyword>
<keyword id="KW-0479">Metal-binding</keyword>
<keyword id="KW-0547">Nucleotide-binding</keyword>
<keyword id="KW-0862">Zinc</keyword>
<name>CLPX_CHLT2</name>
<organism>
    <name type="scientific">Chlamydia trachomatis serovar L2 (strain ATCC VR-902B / DSM 19102 / 434/Bu)</name>
    <dbReference type="NCBI Taxonomy" id="471472"/>
    <lineage>
        <taxon>Bacteria</taxon>
        <taxon>Pseudomonadati</taxon>
        <taxon>Chlamydiota</taxon>
        <taxon>Chlamydiia</taxon>
        <taxon>Chlamydiales</taxon>
        <taxon>Chlamydiaceae</taxon>
        <taxon>Chlamydia/Chlamydophila group</taxon>
        <taxon>Chlamydia</taxon>
    </lineage>
</organism>
<accession>B0B8T1</accession>
<reference key="1">
    <citation type="journal article" date="2008" name="Genome Res.">
        <title>Chlamydia trachomatis: genome sequence analysis of lymphogranuloma venereum isolates.</title>
        <authorList>
            <person name="Thomson N.R."/>
            <person name="Holden M.T.G."/>
            <person name="Carder C."/>
            <person name="Lennard N."/>
            <person name="Lockey S.J."/>
            <person name="Marsh P."/>
            <person name="Skipp P."/>
            <person name="O'Connor C.D."/>
            <person name="Goodhead I."/>
            <person name="Norbertzcak H."/>
            <person name="Harris B."/>
            <person name="Ormond D."/>
            <person name="Rance R."/>
            <person name="Quail M.A."/>
            <person name="Parkhill J."/>
            <person name="Stephens R.S."/>
            <person name="Clarke I.N."/>
        </authorList>
    </citation>
    <scope>NUCLEOTIDE SEQUENCE [LARGE SCALE GENOMIC DNA]</scope>
    <source>
        <strain>ATCC VR-902B / DSM 19102 / 434/Bu</strain>
    </source>
</reference>